<reference key="1">
    <citation type="journal article" date="2000" name="J. Biol. Chem.">
        <title>Cloning and expression of glycolipid transfer protein from bovine and porcine brain.</title>
        <authorList>
            <person name="Lin X."/>
            <person name="Mattjus P."/>
            <person name="Pike H.M."/>
            <person name="Windebank A.J."/>
            <person name="Brown R.E."/>
        </authorList>
    </citation>
    <scope>NUCLEOTIDE SEQUENCE [MRNA]</scope>
    <source>
        <tissue>Brain</tissue>
    </source>
</reference>
<reference key="2">
    <citation type="journal article" date="1990" name="J. Biol. Chem.">
        <title>Primary structure of glycolipid transfer protein from pig brain.</title>
        <authorList>
            <person name="Abe A."/>
        </authorList>
    </citation>
    <scope>PROTEIN SEQUENCE OF 2-209</scope>
    <scope>ACETYLATION AT ALA-2</scope>
    <scope>IDENTIFICATION BY MASS SPECTROMETRY</scope>
    <source>
        <tissue>Brain</tissue>
    </source>
</reference>
<sequence>MALLAEHLLRPLPADKQIETGPFLEAVSHLPPFFDCLGSPVFTPIKADISGNITKIKAVYDTNPTKFRTLQNILEVEKEMYGAEWPKVGATLALMWLKRGLRFIQVFLQSICDGERDENHPNLIRVNATKAYEMALKKYHGWIVQKIFQAALYAAPYKSDFLKALSKGQNVTEEECLEKVRLFLVNYTATIDVIYEMYTRMNAELNYKV</sequence>
<keyword id="KW-0007">Acetylation</keyword>
<keyword id="KW-0963">Cytoplasm</keyword>
<keyword id="KW-0903">Direct protein sequencing</keyword>
<keyword id="KW-0445">Lipid transport</keyword>
<keyword id="KW-1185">Reference proteome</keyword>
<keyword id="KW-0677">Repeat</keyword>
<keyword id="KW-0813">Transport</keyword>
<protein>
    <recommendedName>
        <fullName>Glycolipid transfer protein</fullName>
        <shortName>GLTP</shortName>
    </recommendedName>
</protein>
<name>GLTP_PIG</name>
<dbReference type="EMBL" id="AF209702">
    <property type="protein sequence ID" value="AAF33208.1"/>
    <property type="molecule type" value="mRNA"/>
</dbReference>
<dbReference type="PIR" id="A36432">
    <property type="entry name" value="A36432"/>
</dbReference>
<dbReference type="RefSeq" id="NP_998987.1">
    <property type="nucleotide sequence ID" value="NM_213822.1"/>
</dbReference>
<dbReference type="RefSeq" id="XP_013842375.1">
    <property type="nucleotide sequence ID" value="XM_013986921.1"/>
</dbReference>
<dbReference type="SMR" id="P68266"/>
<dbReference type="FunCoup" id="P68266">
    <property type="interactions" value="481"/>
</dbReference>
<dbReference type="STRING" id="9823.ENSSSCP00000032405"/>
<dbReference type="iPTMnet" id="P68266"/>
<dbReference type="PaxDb" id="9823-ENSSSCP00000010597"/>
<dbReference type="PeptideAtlas" id="P68266"/>
<dbReference type="GeneID" id="396765"/>
<dbReference type="CTD" id="51228"/>
<dbReference type="eggNOG" id="KOG3221">
    <property type="taxonomic scope" value="Eukaryota"/>
</dbReference>
<dbReference type="InParanoid" id="P68266"/>
<dbReference type="OrthoDB" id="205255at2759"/>
<dbReference type="Proteomes" id="UP000008227">
    <property type="component" value="Unplaced"/>
</dbReference>
<dbReference type="Proteomes" id="UP000314985">
    <property type="component" value="Unplaced"/>
</dbReference>
<dbReference type="Proteomes" id="UP000694570">
    <property type="component" value="Unplaced"/>
</dbReference>
<dbReference type="Proteomes" id="UP000694571">
    <property type="component" value="Unplaced"/>
</dbReference>
<dbReference type="Proteomes" id="UP000694720">
    <property type="component" value="Unplaced"/>
</dbReference>
<dbReference type="Proteomes" id="UP000694722">
    <property type="component" value="Unplaced"/>
</dbReference>
<dbReference type="Proteomes" id="UP000694723">
    <property type="component" value="Unplaced"/>
</dbReference>
<dbReference type="Proteomes" id="UP000694724">
    <property type="component" value="Unplaced"/>
</dbReference>
<dbReference type="Proteomes" id="UP000694725">
    <property type="component" value="Unplaced"/>
</dbReference>
<dbReference type="Proteomes" id="UP000694726">
    <property type="component" value="Unplaced"/>
</dbReference>
<dbReference type="Proteomes" id="UP000694727">
    <property type="component" value="Unplaced"/>
</dbReference>
<dbReference type="Proteomes" id="UP000694728">
    <property type="component" value="Unplaced"/>
</dbReference>
<dbReference type="GO" id="GO:0005829">
    <property type="term" value="C:cytosol"/>
    <property type="evidence" value="ECO:0000318"/>
    <property type="project" value="GO_Central"/>
</dbReference>
<dbReference type="GO" id="GO:1902387">
    <property type="term" value="F:ceramide 1-phosphate binding"/>
    <property type="evidence" value="ECO:0000318"/>
    <property type="project" value="GO_Central"/>
</dbReference>
<dbReference type="GO" id="GO:1902388">
    <property type="term" value="F:ceramide 1-phosphate transfer activity"/>
    <property type="evidence" value="ECO:0000318"/>
    <property type="project" value="GO_Central"/>
</dbReference>
<dbReference type="GO" id="GO:0051861">
    <property type="term" value="F:glycolipid binding"/>
    <property type="evidence" value="ECO:0000250"/>
    <property type="project" value="UniProtKB"/>
</dbReference>
<dbReference type="GO" id="GO:0008289">
    <property type="term" value="F:lipid binding"/>
    <property type="evidence" value="ECO:0000250"/>
    <property type="project" value="HGNC-UCL"/>
</dbReference>
<dbReference type="GO" id="GO:0120013">
    <property type="term" value="F:lipid transfer activity"/>
    <property type="evidence" value="ECO:0000250"/>
    <property type="project" value="HGNC"/>
</dbReference>
<dbReference type="GO" id="GO:0035627">
    <property type="term" value="P:ceramide transport"/>
    <property type="evidence" value="ECO:0000318"/>
    <property type="project" value="GO_Central"/>
</dbReference>
<dbReference type="GO" id="GO:0120009">
    <property type="term" value="P:intermembrane lipid transfer"/>
    <property type="evidence" value="ECO:0000250"/>
    <property type="project" value="HGNC"/>
</dbReference>
<dbReference type="FunFam" id="1.10.3520.10:FF:000003">
    <property type="entry name" value="glycolipid transfer protein"/>
    <property type="match status" value="1"/>
</dbReference>
<dbReference type="Gene3D" id="1.10.3520.10">
    <property type="entry name" value="Glycolipid transfer protein"/>
    <property type="match status" value="1"/>
</dbReference>
<dbReference type="InterPro" id="IPR036497">
    <property type="entry name" value="GLTP_sf"/>
</dbReference>
<dbReference type="InterPro" id="IPR014830">
    <property type="entry name" value="Glycolipid_transfer_prot_dom"/>
</dbReference>
<dbReference type="PANTHER" id="PTHR10219:SF97">
    <property type="entry name" value="GLYCOLIPID TRANSFER PROTEIN"/>
    <property type="match status" value="1"/>
</dbReference>
<dbReference type="PANTHER" id="PTHR10219">
    <property type="entry name" value="GLYCOLIPID TRANSFER PROTEIN-RELATED"/>
    <property type="match status" value="1"/>
</dbReference>
<dbReference type="Pfam" id="PF08718">
    <property type="entry name" value="GLTP"/>
    <property type="match status" value="1"/>
</dbReference>
<dbReference type="SUPFAM" id="SSF110004">
    <property type="entry name" value="Glycolipid transfer protein, GLTP"/>
    <property type="match status" value="1"/>
</dbReference>
<proteinExistence type="evidence at protein level"/>
<evidence type="ECO:0000250" key="1"/>
<evidence type="ECO:0000250" key="2">
    <source>
        <dbReference type="UniProtKB" id="Q9NZD2"/>
    </source>
</evidence>
<evidence type="ECO:0000269" key="3">
    <source>
    </source>
</evidence>
<evidence type="ECO:0000305" key="4"/>
<gene>
    <name type="primary">GLTP</name>
</gene>
<organism>
    <name type="scientific">Sus scrofa</name>
    <name type="common">Pig</name>
    <dbReference type="NCBI Taxonomy" id="9823"/>
    <lineage>
        <taxon>Eukaryota</taxon>
        <taxon>Metazoa</taxon>
        <taxon>Chordata</taxon>
        <taxon>Craniata</taxon>
        <taxon>Vertebrata</taxon>
        <taxon>Euteleostomi</taxon>
        <taxon>Mammalia</taxon>
        <taxon>Eutheria</taxon>
        <taxon>Laurasiatheria</taxon>
        <taxon>Artiodactyla</taxon>
        <taxon>Suina</taxon>
        <taxon>Suidae</taxon>
        <taxon>Sus</taxon>
    </lineage>
</organism>
<feature type="initiator methionine" description="Removed" evidence="3">
    <location>
        <position position="1"/>
    </location>
</feature>
<feature type="chain" id="PRO_0000148917" description="Glycolipid transfer protein">
    <location>
        <begin position="2"/>
        <end position="209"/>
    </location>
</feature>
<feature type="repeat" description="1">
    <location>
        <begin position="45"/>
        <end position="55"/>
    </location>
</feature>
<feature type="repeat" description="2">
    <location>
        <begin position="56"/>
        <end position="66"/>
    </location>
</feature>
<feature type="region of interest" description="2 X 12 AA approximate tandem repeats">
    <location>
        <begin position="45"/>
        <end position="66"/>
    </location>
</feature>
<feature type="binding site" evidence="2">
    <location>
        <begin position="48"/>
        <end position="55"/>
    </location>
    <ligand>
        <name>beta-D-galactosyl-(1-&gt;4)-beta-D-glucosyl-(1&lt;-&gt;1)-N-[(9Z)-octadecenoyl]-sphing-4-enine</name>
        <dbReference type="ChEBI" id="CHEBI:131557"/>
    </ligand>
</feature>
<feature type="binding site" evidence="2">
    <location>
        <position position="140"/>
    </location>
    <ligand>
        <name>beta-D-galactosyl-(1-&gt;4)-beta-D-glucosyl-(1&lt;-&gt;1)-N-[(9Z)-octadecenoyl]-sphing-4-enine</name>
        <dbReference type="ChEBI" id="CHEBI:131557"/>
    </ligand>
</feature>
<feature type="binding site" evidence="2">
    <location>
        <position position="207"/>
    </location>
    <ligand>
        <name>beta-D-galactosyl-(1-&gt;4)-beta-D-glucosyl-(1&lt;-&gt;1)-N-[(9Z)-octadecenoyl]-sphing-4-enine</name>
        <dbReference type="ChEBI" id="CHEBI:131557"/>
    </ligand>
</feature>
<feature type="modified residue" description="N-acetylalanine" evidence="3">
    <location>
        <position position="2"/>
    </location>
</feature>
<feature type="sequence conflict" description="In Ref. 2; AA sequence." evidence="4" ref="2">
    <original>R</original>
    <variation>K</variation>
    <location>
        <position position="10"/>
    </location>
</feature>
<feature type="sequence conflict" description="In Ref. 2; AA sequence." evidence="4" ref="2">
    <original>T</original>
    <variation>A</variation>
    <location>
        <position position="65"/>
    </location>
</feature>
<feature type="sequence conflict" description="In Ref. 2; AA sequence." evidence="4" ref="2">
    <original>R</original>
    <variation>K</variation>
    <location>
        <position position="200"/>
    </location>
</feature>
<comment type="function">
    <text evidence="1">Accelerates the intermembrane transfer of various glycolipids. Catalyzes the transfer of various glycosphingolipids between membranes but does not catalyze the transfer of phospholipids. May be involved in the intracellular translocation of glucosylceramides (By similarity).</text>
</comment>
<comment type="subunit">
    <text evidence="1">Monomer.</text>
</comment>
<comment type="subcellular location">
    <subcellularLocation>
        <location evidence="1">Cytoplasm</location>
    </subcellularLocation>
</comment>
<comment type="similarity">
    <text evidence="4">Belongs to the GLTP family.</text>
</comment>
<accession>P68266</accession>
<accession>P17403</accession>
<accession>Q9MYP3</accession>